<evidence type="ECO:0000255" key="1">
    <source>
        <dbReference type="HAMAP-Rule" id="MF_00151"/>
    </source>
</evidence>
<proteinExistence type="inferred from homology"/>
<accession>Q6AFJ7</accession>
<reference key="1">
    <citation type="journal article" date="2004" name="Mol. Plant Microbe Interact.">
        <title>The genome sequence of the Gram-positive sugarcane pathogen Leifsonia xyli subsp. xyli.</title>
        <authorList>
            <person name="Monteiro-Vitorello C.B."/>
            <person name="Camargo L.E.A."/>
            <person name="Van Sluys M.A."/>
            <person name="Kitajima J.P."/>
            <person name="Truffi D."/>
            <person name="do Amaral A.M."/>
            <person name="Harakava R."/>
            <person name="de Oliveira J.C.F."/>
            <person name="Wood D."/>
            <person name="de Oliveira M.C."/>
            <person name="Miyaki C.Y."/>
            <person name="Takita M.A."/>
            <person name="da Silva A.C.R."/>
            <person name="Furlan L.R."/>
            <person name="Carraro D.M."/>
            <person name="Camarotte G."/>
            <person name="Almeida N.F. Jr."/>
            <person name="Carrer H."/>
            <person name="Coutinho L.L."/>
            <person name="El-Dorry H.A."/>
            <person name="Ferro M.I.T."/>
            <person name="Gagliardi P.R."/>
            <person name="Giglioti E."/>
            <person name="Goldman M.H.S."/>
            <person name="Goldman G.H."/>
            <person name="Kimura E.T."/>
            <person name="Ferro E.S."/>
            <person name="Kuramae E.E."/>
            <person name="Lemos E.G.M."/>
            <person name="Lemos M.V.F."/>
            <person name="Mauro S.M.Z."/>
            <person name="Machado M.A."/>
            <person name="Marino C.L."/>
            <person name="Menck C.F."/>
            <person name="Nunes L.R."/>
            <person name="Oliveira R.C."/>
            <person name="Pereira G.G."/>
            <person name="Siqueira W."/>
            <person name="de Souza A.A."/>
            <person name="Tsai S.M."/>
            <person name="Zanca A.S."/>
            <person name="Simpson A.J.G."/>
            <person name="Brumbley S.M."/>
            <person name="Setubal J.C."/>
        </authorList>
    </citation>
    <scope>NUCLEOTIDE SEQUENCE [LARGE SCALE GENOMIC DNA]</scope>
    <source>
        <strain>CTCB07</strain>
    </source>
</reference>
<feature type="chain" id="PRO_0000156227" description="Phosphopantetheine adenylyltransferase">
    <location>
        <begin position="1"/>
        <end position="159"/>
    </location>
</feature>
<feature type="binding site" evidence="1">
    <location>
        <begin position="10"/>
        <end position="11"/>
    </location>
    <ligand>
        <name>ATP</name>
        <dbReference type="ChEBI" id="CHEBI:30616"/>
    </ligand>
</feature>
<feature type="binding site" evidence="1">
    <location>
        <position position="10"/>
    </location>
    <ligand>
        <name>substrate</name>
    </ligand>
</feature>
<feature type="binding site" evidence="1">
    <location>
        <position position="18"/>
    </location>
    <ligand>
        <name>ATP</name>
        <dbReference type="ChEBI" id="CHEBI:30616"/>
    </ligand>
</feature>
<feature type="binding site" evidence="1">
    <location>
        <position position="42"/>
    </location>
    <ligand>
        <name>substrate</name>
    </ligand>
</feature>
<feature type="binding site" evidence="1">
    <location>
        <position position="77"/>
    </location>
    <ligand>
        <name>substrate</name>
    </ligand>
</feature>
<feature type="binding site" evidence="1">
    <location>
        <position position="91"/>
    </location>
    <ligand>
        <name>substrate</name>
    </ligand>
</feature>
<feature type="binding site" evidence="1">
    <location>
        <begin position="92"/>
        <end position="94"/>
    </location>
    <ligand>
        <name>ATP</name>
        <dbReference type="ChEBI" id="CHEBI:30616"/>
    </ligand>
</feature>
<feature type="binding site" evidence="1">
    <location>
        <position position="102"/>
    </location>
    <ligand>
        <name>ATP</name>
        <dbReference type="ChEBI" id="CHEBI:30616"/>
    </ligand>
</feature>
<feature type="binding site" evidence="1">
    <location>
        <begin position="126"/>
        <end position="132"/>
    </location>
    <ligand>
        <name>ATP</name>
        <dbReference type="ChEBI" id="CHEBI:30616"/>
    </ligand>
</feature>
<feature type="site" description="Transition state stabilizer" evidence="1">
    <location>
        <position position="18"/>
    </location>
</feature>
<keyword id="KW-0067">ATP-binding</keyword>
<keyword id="KW-0173">Coenzyme A biosynthesis</keyword>
<keyword id="KW-0963">Cytoplasm</keyword>
<keyword id="KW-0460">Magnesium</keyword>
<keyword id="KW-0547">Nucleotide-binding</keyword>
<keyword id="KW-0548">Nucleotidyltransferase</keyword>
<keyword id="KW-1185">Reference proteome</keyword>
<keyword id="KW-0808">Transferase</keyword>
<comment type="function">
    <text evidence="1">Reversibly transfers an adenylyl group from ATP to 4'-phosphopantetheine, yielding dephospho-CoA (dPCoA) and pyrophosphate.</text>
</comment>
<comment type="catalytic activity">
    <reaction evidence="1">
        <text>(R)-4'-phosphopantetheine + ATP + H(+) = 3'-dephospho-CoA + diphosphate</text>
        <dbReference type="Rhea" id="RHEA:19801"/>
        <dbReference type="ChEBI" id="CHEBI:15378"/>
        <dbReference type="ChEBI" id="CHEBI:30616"/>
        <dbReference type="ChEBI" id="CHEBI:33019"/>
        <dbReference type="ChEBI" id="CHEBI:57328"/>
        <dbReference type="ChEBI" id="CHEBI:61723"/>
        <dbReference type="EC" id="2.7.7.3"/>
    </reaction>
</comment>
<comment type="cofactor">
    <cofactor evidence="1">
        <name>Mg(2+)</name>
        <dbReference type="ChEBI" id="CHEBI:18420"/>
    </cofactor>
</comment>
<comment type="pathway">
    <text evidence="1">Cofactor biosynthesis; coenzyme A biosynthesis; CoA from (R)-pantothenate: step 4/5.</text>
</comment>
<comment type="subunit">
    <text evidence="1">Homohexamer.</text>
</comment>
<comment type="subcellular location">
    <subcellularLocation>
        <location evidence="1">Cytoplasm</location>
    </subcellularLocation>
</comment>
<comment type="similarity">
    <text evidence="1">Belongs to the bacterial CoaD family.</text>
</comment>
<protein>
    <recommendedName>
        <fullName evidence="1">Phosphopantetheine adenylyltransferase</fullName>
        <ecNumber evidence="1">2.7.7.3</ecNumber>
    </recommendedName>
    <alternativeName>
        <fullName evidence="1">Dephospho-CoA pyrophosphorylase</fullName>
    </alternativeName>
    <alternativeName>
        <fullName evidence="1">Pantetheine-phosphate adenylyltransferase</fullName>
        <shortName evidence="1">PPAT</shortName>
    </alternativeName>
</protein>
<organism>
    <name type="scientific">Leifsonia xyli subsp. xyli (strain CTCB07)</name>
    <dbReference type="NCBI Taxonomy" id="281090"/>
    <lineage>
        <taxon>Bacteria</taxon>
        <taxon>Bacillati</taxon>
        <taxon>Actinomycetota</taxon>
        <taxon>Actinomycetes</taxon>
        <taxon>Micrococcales</taxon>
        <taxon>Microbacteriaceae</taxon>
        <taxon>Leifsonia</taxon>
    </lineage>
</organism>
<sequence length="159" mass="16944">MHRIAVVPGSFDPVTLGHLDVIERAARMWDEVHVLVVHNPDKSALLPIAQRVALLDRSIEDAGIAGNIVASWSVGLLVDYCTDIGAHVLVKGIRSQVDVAYETPMAIVNRHLAEVETVFLLPNPANAHVSSSLVRQVASLGGDVSPYVPAAVSELLSSS</sequence>
<gene>
    <name evidence="1" type="primary">coaD</name>
    <name type="ordered locus">Lxx09760</name>
</gene>
<name>COAD_LEIXX</name>
<dbReference type="EC" id="2.7.7.3" evidence="1"/>
<dbReference type="EMBL" id="AE016822">
    <property type="protein sequence ID" value="AAT88848.1"/>
    <property type="molecule type" value="Genomic_DNA"/>
</dbReference>
<dbReference type="RefSeq" id="WP_011185845.1">
    <property type="nucleotide sequence ID" value="NC_006087.1"/>
</dbReference>
<dbReference type="SMR" id="Q6AFJ7"/>
<dbReference type="STRING" id="281090.Lxx09760"/>
<dbReference type="KEGG" id="lxx:Lxx09760"/>
<dbReference type="eggNOG" id="COG0669">
    <property type="taxonomic scope" value="Bacteria"/>
</dbReference>
<dbReference type="HOGENOM" id="CLU_100149_1_0_11"/>
<dbReference type="UniPathway" id="UPA00241">
    <property type="reaction ID" value="UER00355"/>
</dbReference>
<dbReference type="Proteomes" id="UP000001306">
    <property type="component" value="Chromosome"/>
</dbReference>
<dbReference type="GO" id="GO:0005737">
    <property type="term" value="C:cytoplasm"/>
    <property type="evidence" value="ECO:0007669"/>
    <property type="project" value="UniProtKB-SubCell"/>
</dbReference>
<dbReference type="GO" id="GO:0005524">
    <property type="term" value="F:ATP binding"/>
    <property type="evidence" value="ECO:0007669"/>
    <property type="project" value="UniProtKB-KW"/>
</dbReference>
<dbReference type="GO" id="GO:0004595">
    <property type="term" value="F:pantetheine-phosphate adenylyltransferase activity"/>
    <property type="evidence" value="ECO:0007669"/>
    <property type="project" value="UniProtKB-UniRule"/>
</dbReference>
<dbReference type="GO" id="GO:0015937">
    <property type="term" value="P:coenzyme A biosynthetic process"/>
    <property type="evidence" value="ECO:0007669"/>
    <property type="project" value="UniProtKB-UniRule"/>
</dbReference>
<dbReference type="CDD" id="cd02163">
    <property type="entry name" value="PPAT"/>
    <property type="match status" value="1"/>
</dbReference>
<dbReference type="Gene3D" id="3.40.50.620">
    <property type="entry name" value="HUPs"/>
    <property type="match status" value="1"/>
</dbReference>
<dbReference type="HAMAP" id="MF_00151">
    <property type="entry name" value="PPAT_bact"/>
    <property type="match status" value="1"/>
</dbReference>
<dbReference type="InterPro" id="IPR004821">
    <property type="entry name" value="Cyt_trans-like"/>
</dbReference>
<dbReference type="InterPro" id="IPR001980">
    <property type="entry name" value="PPAT"/>
</dbReference>
<dbReference type="InterPro" id="IPR014729">
    <property type="entry name" value="Rossmann-like_a/b/a_fold"/>
</dbReference>
<dbReference type="NCBIfam" id="TIGR01510">
    <property type="entry name" value="coaD_prev_kdtB"/>
    <property type="match status" value="1"/>
</dbReference>
<dbReference type="NCBIfam" id="TIGR00125">
    <property type="entry name" value="cyt_tran_rel"/>
    <property type="match status" value="1"/>
</dbReference>
<dbReference type="PANTHER" id="PTHR21342">
    <property type="entry name" value="PHOSPHOPANTETHEINE ADENYLYLTRANSFERASE"/>
    <property type="match status" value="1"/>
</dbReference>
<dbReference type="PANTHER" id="PTHR21342:SF1">
    <property type="entry name" value="PHOSPHOPANTETHEINE ADENYLYLTRANSFERASE"/>
    <property type="match status" value="1"/>
</dbReference>
<dbReference type="Pfam" id="PF01467">
    <property type="entry name" value="CTP_transf_like"/>
    <property type="match status" value="1"/>
</dbReference>
<dbReference type="PRINTS" id="PR01020">
    <property type="entry name" value="LPSBIOSNTHSS"/>
</dbReference>
<dbReference type="SUPFAM" id="SSF52374">
    <property type="entry name" value="Nucleotidylyl transferase"/>
    <property type="match status" value="1"/>
</dbReference>